<evidence type="ECO:0000255" key="1">
    <source>
        <dbReference type="HAMAP-Rule" id="MF_00211"/>
    </source>
</evidence>
<proteinExistence type="inferred from homology"/>
<keyword id="KW-0028">Amino-acid biosynthesis</keyword>
<keyword id="KW-0057">Aromatic amino acid biosynthesis</keyword>
<keyword id="KW-0328">Glycosyltransferase</keyword>
<keyword id="KW-0460">Magnesium</keyword>
<keyword id="KW-0479">Metal-binding</keyword>
<keyword id="KW-0808">Transferase</keyword>
<keyword id="KW-0822">Tryptophan biosynthesis</keyword>
<reference key="1">
    <citation type="submission" date="2008-05" db="EMBL/GenBank/DDBJ databases">
        <title>Complete sequence of Rhodopseudomonas palustris TIE-1.</title>
        <authorList>
            <consortium name="US DOE Joint Genome Institute"/>
            <person name="Lucas S."/>
            <person name="Copeland A."/>
            <person name="Lapidus A."/>
            <person name="Glavina del Rio T."/>
            <person name="Dalin E."/>
            <person name="Tice H."/>
            <person name="Pitluck S."/>
            <person name="Chain P."/>
            <person name="Malfatti S."/>
            <person name="Shin M."/>
            <person name="Vergez L."/>
            <person name="Lang D."/>
            <person name="Schmutz J."/>
            <person name="Larimer F."/>
            <person name="Land M."/>
            <person name="Hauser L."/>
            <person name="Kyrpides N."/>
            <person name="Mikhailova N."/>
            <person name="Emerson D."/>
            <person name="Newman D.K."/>
            <person name="Roden E."/>
            <person name="Richardson P."/>
        </authorList>
    </citation>
    <scope>NUCLEOTIDE SEQUENCE [LARGE SCALE GENOMIC DNA]</scope>
    <source>
        <strain>TIE-1</strain>
    </source>
</reference>
<name>TRPD_RHOPT</name>
<protein>
    <recommendedName>
        <fullName evidence="1">Anthranilate phosphoribosyltransferase</fullName>
        <ecNumber evidence="1">2.4.2.18</ecNumber>
    </recommendedName>
</protein>
<sequence length="338" mass="34452">MVDFKSIIAKVATGATLTRDEATDAFDAMMSGDATPSQMGALLMGLRVRGETVDEITGAVTTMRAKMLPVTAPPDAVDIVGTGGDGSGSVNVSTCASFVVAGCGVTVAKHGNRALSSKSGAADVLAALGVKIDITPEQVGRCVNEAGIGFMFAPTHHPAMKNVGPTRVELATRTIFNLLGPLSNPAGVKRQMIGVFSRQWVQPLAQVLKNLGSEAVWVVHGSDGLDEITLSGTTAVAELKNGEITSFEISPEDAGLPRAPADALKGGDAQANAVALRAVLEGMPGPYRDVALLNAAATLVVAGKARDLKEGVALGTQSIDSGAAEARLKKLIAVSAAA</sequence>
<gene>
    <name evidence="1" type="primary">trpD</name>
    <name type="ordered locus">Rpal_3235</name>
</gene>
<feature type="chain" id="PRO_1000099839" description="Anthranilate phosphoribosyltransferase">
    <location>
        <begin position="1"/>
        <end position="338"/>
    </location>
</feature>
<feature type="binding site" evidence="1">
    <location>
        <position position="81"/>
    </location>
    <ligand>
        <name>5-phospho-alpha-D-ribose 1-diphosphate</name>
        <dbReference type="ChEBI" id="CHEBI:58017"/>
    </ligand>
</feature>
<feature type="binding site" evidence="1">
    <location>
        <position position="81"/>
    </location>
    <ligand>
        <name>anthranilate</name>
        <dbReference type="ChEBI" id="CHEBI:16567"/>
        <label>1</label>
    </ligand>
</feature>
<feature type="binding site" evidence="1">
    <location>
        <begin position="84"/>
        <end position="85"/>
    </location>
    <ligand>
        <name>5-phospho-alpha-D-ribose 1-diphosphate</name>
        <dbReference type="ChEBI" id="CHEBI:58017"/>
    </ligand>
</feature>
<feature type="binding site" evidence="1">
    <location>
        <position position="89"/>
    </location>
    <ligand>
        <name>5-phospho-alpha-D-ribose 1-diphosphate</name>
        <dbReference type="ChEBI" id="CHEBI:58017"/>
    </ligand>
</feature>
<feature type="binding site" evidence="1">
    <location>
        <begin position="91"/>
        <end position="94"/>
    </location>
    <ligand>
        <name>5-phospho-alpha-D-ribose 1-diphosphate</name>
        <dbReference type="ChEBI" id="CHEBI:58017"/>
    </ligand>
</feature>
<feature type="binding site" evidence="1">
    <location>
        <position position="93"/>
    </location>
    <ligand>
        <name>Mg(2+)</name>
        <dbReference type="ChEBI" id="CHEBI:18420"/>
        <label>1</label>
    </ligand>
</feature>
<feature type="binding site" evidence="1">
    <location>
        <begin position="109"/>
        <end position="117"/>
    </location>
    <ligand>
        <name>5-phospho-alpha-D-ribose 1-diphosphate</name>
        <dbReference type="ChEBI" id="CHEBI:58017"/>
    </ligand>
</feature>
<feature type="binding site" evidence="1">
    <location>
        <position position="112"/>
    </location>
    <ligand>
        <name>anthranilate</name>
        <dbReference type="ChEBI" id="CHEBI:16567"/>
        <label>1</label>
    </ligand>
</feature>
<feature type="binding site" evidence="1">
    <location>
        <position position="121"/>
    </location>
    <ligand>
        <name>5-phospho-alpha-D-ribose 1-diphosphate</name>
        <dbReference type="ChEBI" id="CHEBI:58017"/>
    </ligand>
</feature>
<feature type="binding site" evidence="1">
    <location>
        <position position="167"/>
    </location>
    <ligand>
        <name>anthranilate</name>
        <dbReference type="ChEBI" id="CHEBI:16567"/>
        <label>2</label>
    </ligand>
</feature>
<feature type="binding site" evidence="1">
    <location>
        <position position="226"/>
    </location>
    <ligand>
        <name>Mg(2+)</name>
        <dbReference type="ChEBI" id="CHEBI:18420"/>
        <label>2</label>
    </ligand>
</feature>
<feature type="binding site" evidence="1">
    <location>
        <position position="227"/>
    </location>
    <ligand>
        <name>Mg(2+)</name>
        <dbReference type="ChEBI" id="CHEBI:18420"/>
        <label>1</label>
    </ligand>
</feature>
<feature type="binding site" evidence="1">
    <location>
        <position position="227"/>
    </location>
    <ligand>
        <name>Mg(2+)</name>
        <dbReference type="ChEBI" id="CHEBI:18420"/>
        <label>2</label>
    </ligand>
</feature>
<accession>B3Q6M8</accession>
<dbReference type="EC" id="2.4.2.18" evidence="1"/>
<dbReference type="EMBL" id="CP001096">
    <property type="protein sequence ID" value="ACF01737.1"/>
    <property type="molecule type" value="Genomic_DNA"/>
</dbReference>
<dbReference type="RefSeq" id="WP_012496335.1">
    <property type="nucleotide sequence ID" value="NC_011004.1"/>
</dbReference>
<dbReference type="SMR" id="B3Q6M8"/>
<dbReference type="KEGG" id="rpt:Rpal_3235"/>
<dbReference type="HOGENOM" id="CLU_034315_2_1_5"/>
<dbReference type="OrthoDB" id="9806430at2"/>
<dbReference type="UniPathway" id="UPA00035">
    <property type="reaction ID" value="UER00041"/>
</dbReference>
<dbReference type="Proteomes" id="UP000001725">
    <property type="component" value="Chromosome"/>
</dbReference>
<dbReference type="GO" id="GO:0005829">
    <property type="term" value="C:cytosol"/>
    <property type="evidence" value="ECO:0007669"/>
    <property type="project" value="TreeGrafter"/>
</dbReference>
<dbReference type="GO" id="GO:0004048">
    <property type="term" value="F:anthranilate phosphoribosyltransferase activity"/>
    <property type="evidence" value="ECO:0007669"/>
    <property type="project" value="UniProtKB-UniRule"/>
</dbReference>
<dbReference type="GO" id="GO:0000287">
    <property type="term" value="F:magnesium ion binding"/>
    <property type="evidence" value="ECO:0007669"/>
    <property type="project" value="UniProtKB-UniRule"/>
</dbReference>
<dbReference type="GO" id="GO:0000162">
    <property type="term" value="P:L-tryptophan biosynthetic process"/>
    <property type="evidence" value="ECO:0007669"/>
    <property type="project" value="UniProtKB-UniRule"/>
</dbReference>
<dbReference type="FunFam" id="3.40.1030.10:FF:000002">
    <property type="entry name" value="Anthranilate phosphoribosyltransferase"/>
    <property type="match status" value="1"/>
</dbReference>
<dbReference type="Gene3D" id="3.40.1030.10">
    <property type="entry name" value="Nucleoside phosphorylase/phosphoribosyltransferase catalytic domain"/>
    <property type="match status" value="1"/>
</dbReference>
<dbReference type="Gene3D" id="1.20.970.10">
    <property type="entry name" value="Transferase, Pyrimidine Nucleoside Phosphorylase, Chain C"/>
    <property type="match status" value="1"/>
</dbReference>
<dbReference type="HAMAP" id="MF_00211">
    <property type="entry name" value="TrpD"/>
    <property type="match status" value="1"/>
</dbReference>
<dbReference type="InterPro" id="IPR005940">
    <property type="entry name" value="Anthranilate_Pribosyl_Tfrase"/>
</dbReference>
<dbReference type="InterPro" id="IPR000312">
    <property type="entry name" value="Glycosyl_Trfase_fam3"/>
</dbReference>
<dbReference type="InterPro" id="IPR017459">
    <property type="entry name" value="Glycosyl_Trfase_fam3_N_dom"/>
</dbReference>
<dbReference type="InterPro" id="IPR036320">
    <property type="entry name" value="Glycosyl_Trfase_fam3_N_dom_sf"/>
</dbReference>
<dbReference type="InterPro" id="IPR035902">
    <property type="entry name" value="Nuc_phospho_transferase"/>
</dbReference>
<dbReference type="NCBIfam" id="TIGR01245">
    <property type="entry name" value="trpD"/>
    <property type="match status" value="1"/>
</dbReference>
<dbReference type="PANTHER" id="PTHR43285">
    <property type="entry name" value="ANTHRANILATE PHOSPHORIBOSYLTRANSFERASE"/>
    <property type="match status" value="1"/>
</dbReference>
<dbReference type="PANTHER" id="PTHR43285:SF2">
    <property type="entry name" value="ANTHRANILATE PHOSPHORIBOSYLTRANSFERASE"/>
    <property type="match status" value="1"/>
</dbReference>
<dbReference type="Pfam" id="PF02885">
    <property type="entry name" value="Glycos_trans_3N"/>
    <property type="match status" value="1"/>
</dbReference>
<dbReference type="Pfam" id="PF00591">
    <property type="entry name" value="Glycos_transf_3"/>
    <property type="match status" value="1"/>
</dbReference>
<dbReference type="SUPFAM" id="SSF52418">
    <property type="entry name" value="Nucleoside phosphorylase/phosphoribosyltransferase catalytic domain"/>
    <property type="match status" value="1"/>
</dbReference>
<dbReference type="SUPFAM" id="SSF47648">
    <property type="entry name" value="Nucleoside phosphorylase/phosphoribosyltransferase N-terminal domain"/>
    <property type="match status" value="1"/>
</dbReference>
<comment type="function">
    <text evidence="1">Catalyzes the transfer of the phosphoribosyl group of 5-phosphorylribose-1-pyrophosphate (PRPP) to anthranilate to yield N-(5'-phosphoribosyl)-anthranilate (PRA).</text>
</comment>
<comment type="catalytic activity">
    <reaction evidence="1">
        <text>N-(5-phospho-beta-D-ribosyl)anthranilate + diphosphate = 5-phospho-alpha-D-ribose 1-diphosphate + anthranilate</text>
        <dbReference type="Rhea" id="RHEA:11768"/>
        <dbReference type="ChEBI" id="CHEBI:16567"/>
        <dbReference type="ChEBI" id="CHEBI:18277"/>
        <dbReference type="ChEBI" id="CHEBI:33019"/>
        <dbReference type="ChEBI" id="CHEBI:58017"/>
        <dbReference type="EC" id="2.4.2.18"/>
    </reaction>
</comment>
<comment type="cofactor">
    <cofactor evidence="1">
        <name>Mg(2+)</name>
        <dbReference type="ChEBI" id="CHEBI:18420"/>
    </cofactor>
    <text evidence="1">Binds 2 magnesium ions per monomer.</text>
</comment>
<comment type="pathway">
    <text evidence="1">Amino-acid biosynthesis; L-tryptophan biosynthesis; L-tryptophan from chorismate: step 2/5.</text>
</comment>
<comment type="subunit">
    <text evidence="1">Homodimer.</text>
</comment>
<comment type="similarity">
    <text evidence="1">Belongs to the anthranilate phosphoribosyltransferase family.</text>
</comment>
<organism>
    <name type="scientific">Rhodopseudomonas palustris (strain TIE-1)</name>
    <dbReference type="NCBI Taxonomy" id="395960"/>
    <lineage>
        <taxon>Bacteria</taxon>
        <taxon>Pseudomonadati</taxon>
        <taxon>Pseudomonadota</taxon>
        <taxon>Alphaproteobacteria</taxon>
        <taxon>Hyphomicrobiales</taxon>
        <taxon>Nitrobacteraceae</taxon>
        <taxon>Rhodopseudomonas</taxon>
    </lineage>
</organism>